<keyword id="KW-1185">Reference proteome</keyword>
<accession>O31573</accession>
<reference key="1">
    <citation type="journal article" date="1996" name="DNA Res.">
        <title>Cloning and sequencing of a 27.8-kb nucleotide sequence of the 79 degrees-81 degrees region of the Bacillus subtilis genome containing the sspE locus.</title>
        <authorList>
            <person name="Yamamoto H."/>
            <person name="Uchiyama S."/>
            <person name="Sekiguchi J."/>
        </authorList>
    </citation>
    <scope>NUCLEOTIDE SEQUENCE [GENOMIC DNA]</scope>
</reference>
<reference key="2">
    <citation type="journal article" date="1997" name="Nature">
        <title>The complete genome sequence of the Gram-positive bacterium Bacillus subtilis.</title>
        <authorList>
            <person name="Kunst F."/>
            <person name="Ogasawara N."/>
            <person name="Moszer I."/>
            <person name="Albertini A.M."/>
            <person name="Alloni G."/>
            <person name="Azevedo V."/>
            <person name="Bertero M.G."/>
            <person name="Bessieres P."/>
            <person name="Bolotin A."/>
            <person name="Borchert S."/>
            <person name="Borriss R."/>
            <person name="Boursier L."/>
            <person name="Brans A."/>
            <person name="Braun M."/>
            <person name="Brignell S.C."/>
            <person name="Bron S."/>
            <person name="Brouillet S."/>
            <person name="Bruschi C.V."/>
            <person name="Caldwell B."/>
            <person name="Capuano V."/>
            <person name="Carter N.M."/>
            <person name="Choi S.-K."/>
            <person name="Codani J.-J."/>
            <person name="Connerton I.F."/>
            <person name="Cummings N.J."/>
            <person name="Daniel R.A."/>
            <person name="Denizot F."/>
            <person name="Devine K.M."/>
            <person name="Duesterhoeft A."/>
            <person name="Ehrlich S.D."/>
            <person name="Emmerson P.T."/>
            <person name="Entian K.-D."/>
            <person name="Errington J."/>
            <person name="Fabret C."/>
            <person name="Ferrari E."/>
            <person name="Foulger D."/>
            <person name="Fritz C."/>
            <person name="Fujita M."/>
            <person name="Fujita Y."/>
            <person name="Fuma S."/>
            <person name="Galizzi A."/>
            <person name="Galleron N."/>
            <person name="Ghim S.-Y."/>
            <person name="Glaser P."/>
            <person name="Goffeau A."/>
            <person name="Golightly E.J."/>
            <person name="Grandi G."/>
            <person name="Guiseppi G."/>
            <person name="Guy B.J."/>
            <person name="Haga K."/>
            <person name="Haiech J."/>
            <person name="Harwood C.R."/>
            <person name="Henaut A."/>
            <person name="Hilbert H."/>
            <person name="Holsappel S."/>
            <person name="Hosono S."/>
            <person name="Hullo M.-F."/>
            <person name="Itaya M."/>
            <person name="Jones L.-M."/>
            <person name="Joris B."/>
            <person name="Karamata D."/>
            <person name="Kasahara Y."/>
            <person name="Klaerr-Blanchard M."/>
            <person name="Klein C."/>
            <person name="Kobayashi Y."/>
            <person name="Koetter P."/>
            <person name="Koningstein G."/>
            <person name="Krogh S."/>
            <person name="Kumano M."/>
            <person name="Kurita K."/>
            <person name="Lapidus A."/>
            <person name="Lardinois S."/>
            <person name="Lauber J."/>
            <person name="Lazarevic V."/>
            <person name="Lee S.-M."/>
            <person name="Levine A."/>
            <person name="Liu H."/>
            <person name="Masuda S."/>
            <person name="Mauel C."/>
            <person name="Medigue C."/>
            <person name="Medina N."/>
            <person name="Mellado R.P."/>
            <person name="Mizuno M."/>
            <person name="Moestl D."/>
            <person name="Nakai S."/>
            <person name="Noback M."/>
            <person name="Noone D."/>
            <person name="O'Reilly M."/>
            <person name="Ogawa K."/>
            <person name="Ogiwara A."/>
            <person name="Oudega B."/>
            <person name="Park S.-H."/>
            <person name="Parro V."/>
            <person name="Pohl T.M."/>
            <person name="Portetelle D."/>
            <person name="Porwollik S."/>
            <person name="Prescott A.M."/>
            <person name="Presecan E."/>
            <person name="Pujic P."/>
            <person name="Purnelle B."/>
            <person name="Rapoport G."/>
            <person name="Rey M."/>
            <person name="Reynolds S."/>
            <person name="Rieger M."/>
            <person name="Rivolta C."/>
            <person name="Rocha E."/>
            <person name="Roche B."/>
            <person name="Rose M."/>
            <person name="Sadaie Y."/>
            <person name="Sato T."/>
            <person name="Scanlan E."/>
            <person name="Schleich S."/>
            <person name="Schroeter R."/>
            <person name="Scoffone F."/>
            <person name="Sekiguchi J."/>
            <person name="Sekowska A."/>
            <person name="Seror S.J."/>
            <person name="Serror P."/>
            <person name="Shin B.-S."/>
            <person name="Soldo B."/>
            <person name="Sorokin A."/>
            <person name="Tacconi E."/>
            <person name="Takagi T."/>
            <person name="Takahashi H."/>
            <person name="Takemaru K."/>
            <person name="Takeuchi M."/>
            <person name="Tamakoshi A."/>
            <person name="Tanaka T."/>
            <person name="Terpstra P."/>
            <person name="Tognoni A."/>
            <person name="Tosato V."/>
            <person name="Uchiyama S."/>
            <person name="Vandenbol M."/>
            <person name="Vannier F."/>
            <person name="Vassarotti A."/>
            <person name="Viari A."/>
            <person name="Wambutt R."/>
            <person name="Wedler E."/>
            <person name="Wedler H."/>
            <person name="Weitzenegger T."/>
            <person name="Winters P."/>
            <person name="Wipat A."/>
            <person name="Yamamoto H."/>
            <person name="Yamane K."/>
            <person name="Yasumoto K."/>
            <person name="Yata K."/>
            <person name="Yoshida K."/>
            <person name="Yoshikawa H.-F."/>
            <person name="Zumstein E."/>
            <person name="Yoshikawa H."/>
            <person name="Danchin A."/>
        </authorList>
    </citation>
    <scope>NUCLEOTIDE SEQUENCE [LARGE SCALE GENOMIC DNA]</scope>
    <source>
        <strain>168</strain>
    </source>
</reference>
<proteinExistence type="predicted"/>
<protein>
    <recommendedName>
        <fullName>Uncharacterized protein YfhE</fullName>
    </recommendedName>
</protein>
<gene>
    <name type="primary">yfhE</name>
    <name type="ordered locus">BSU08500</name>
</gene>
<sequence>MEKKREKHQQGANLKKMQEVLYSGEFKKAEKAAKRK</sequence>
<name>YFHE_BACSU</name>
<dbReference type="EMBL" id="D85082">
    <property type="protein sequence ID" value="BAA24471.1"/>
    <property type="molecule type" value="Genomic_DNA"/>
</dbReference>
<dbReference type="EMBL" id="AL009126">
    <property type="protein sequence ID" value="CAB12679.1"/>
    <property type="molecule type" value="Genomic_DNA"/>
</dbReference>
<dbReference type="PIR" id="F69800">
    <property type="entry name" value="F69800"/>
</dbReference>
<dbReference type="RefSeq" id="NP_388731.1">
    <property type="nucleotide sequence ID" value="NC_000964.3"/>
</dbReference>
<dbReference type="RefSeq" id="WP_003223230.1">
    <property type="nucleotide sequence ID" value="NZ_OZ025638.1"/>
</dbReference>
<dbReference type="FunCoup" id="O31573">
    <property type="interactions" value="24"/>
</dbReference>
<dbReference type="STRING" id="224308.BSU08500"/>
<dbReference type="PaxDb" id="224308-BSU08500"/>
<dbReference type="EnsemblBacteria" id="CAB12679">
    <property type="protein sequence ID" value="CAB12679"/>
    <property type="gene ID" value="BSU_08500"/>
</dbReference>
<dbReference type="GeneID" id="936184"/>
<dbReference type="KEGG" id="bsu:BSU08500"/>
<dbReference type="PATRIC" id="fig|224308.179.peg.917"/>
<dbReference type="InParanoid" id="O31573"/>
<dbReference type="BioCyc" id="BSUB:BSU08500-MONOMER"/>
<dbReference type="PRO" id="PR:O31573"/>
<dbReference type="Proteomes" id="UP000001570">
    <property type="component" value="Chromosome"/>
</dbReference>
<dbReference type="InterPro" id="IPR025437">
    <property type="entry name" value="YfhE-like"/>
</dbReference>
<dbReference type="Pfam" id="PF14152">
    <property type="entry name" value="YfhE"/>
    <property type="match status" value="1"/>
</dbReference>
<feature type="chain" id="PRO_0000049522" description="Uncharacterized protein YfhE">
    <location>
        <begin position="1"/>
        <end position="36"/>
    </location>
</feature>
<organism>
    <name type="scientific">Bacillus subtilis (strain 168)</name>
    <dbReference type="NCBI Taxonomy" id="224308"/>
    <lineage>
        <taxon>Bacteria</taxon>
        <taxon>Bacillati</taxon>
        <taxon>Bacillota</taxon>
        <taxon>Bacilli</taxon>
        <taxon>Bacillales</taxon>
        <taxon>Bacillaceae</taxon>
        <taxon>Bacillus</taxon>
    </lineage>
</organism>